<keyword id="KW-1185">Reference proteome</keyword>
<gene>
    <name type="ordered locus">SCO0678</name>
    <name type="ORF">SCF91.38c</name>
</gene>
<accession>Q9RJ87</accession>
<reference key="1">
    <citation type="journal article" date="2002" name="Nature">
        <title>Complete genome sequence of the model actinomycete Streptomyces coelicolor A3(2).</title>
        <authorList>
            <person name="Bentley S.D."/>
            <person name="Chater K.F."/>
            <person name="Cerdeno-Tarraga A.-M."/>
            <person name="Challis G.L."/>
            <person name="Thomson N.R."/>
            <person name="James K.D."/>
            <person name="Harris D.E."/>
            <person name="Quail M.A."/>
            <person name="Kieser H."/>
            <person name="Harper D."/>
            <person name="Bateman A."/>
            <person name="Brown S."/>
            <person name="Chandra G."/>
            <person name="Chen C.W."/>
            <person name="Collins M."/>
            <person name="Cronin A."/>
            <person name="Fraser A."/>
            <person name="Goble A."/>
            <person name="Hidalgo J."/>
            <person name="Hornsby T."/>
            <person name="Howarth S."/>
            <person name="Huang C.-H."/>
            <person name="Kieser T."/>
            <person name="Larke L."/>
            <person name="Murphy L.D."/>
            <person name="Oliver K."/>
            <person name="O'Neil S."/>
            <person name="Rabbinowitsch E."/>
            <person name="Rajandream M.A."/>
            <person name="Rutherford K.M."/>
            <person name="Rutter S."/>
            <person name="Seeger K."/>
            <person name="Saunders D."/>
            <person name="Sharp S."/>
            <person name="Squares R."/>
            <person name="Squares S."/>
            <person name="Taylor K."/>
            <person name="Warren T."/>
            <person name="Wietzorrek A."/>
            <person name="Woodward J.R."/>
            <person name="Barrell B.G."/>
            <person name="Parkhill J."/>
            <person name="Hopwood D.A."/>
        </authorList>
    </citation>
    <scope>NUCLEOTIDE SEQUENCE [LARGE SCALE GENOMIC DNA]</scope>
    <source>
        <strain>ATCC BAA-471 / A3(2) / M145</strain>
    </source>
</reference>
<name>Y678_STRCO</name>
<dbReference type="EMBL" id="AL939106">
    <property type="protein sequence ID" value="CAB61195.1"/>
    <property type="molecule type" value="Genomic_DNA"/>
</dbReference>
<dbReference type="RefSeq" id="NP_624987.1">
    <property type="nucleotide sequence ID" value="NC_003888.3"/>
</dbReference>
<dbReference type="RefSeq" id="WP_011027290.1">
    <property type="nucleotide sequence ID" value="NZ_VNID01000004.1"/>
</dbReference>
<dbReference type="SMR" id="Q9RJ87"/>
<dbReference type="STRING" id="100226.gene:17758261"/>
<dbReference type="PaxDb" id="100226-SCO0678"/>
<dbReference type="KEGG" id="sco:SCO0678"/>
<dbReference type="PATRIC" id="fig|100226.15.peg.664"/>
<dbReference type="HOGENOM" id="CLU_135567_1_1_11"/>
<dbReference type="InParanoid" id="Q9RJ87"/>
<dbReference type="OrthoDB" id="2143260at2"/>
<dbReference type="Proteomes" id="UP000001973">
    <property type="component" value="Chromosome"/>
</dbReference>
<dbReference type="Gene3D" id="1.10.1470.10">
    <property type="entry name" value="YjbJ"/>
    <property type="match status" value="1"/>
</dbReference>
<dbReference type="InterPro" id="IPR008462">
    <property type="entry name" value="CsbD"/>
</dbReference>
<dbReference type="InterPro" id="IPR036629">
    <property type="entry name" value="YjbJ_sf"/>
</dbReference>
<dbReference type="Pfam" id="PF05532">
    <property type="entry name" value="CsbD"/>
    <property type="match status" value="1"/>
</dbReference>
<dbReference type="SUPFAM" id="SSF69047">
    <property type="entry name" value="Hypothetical protein YjbJ"/>
    <property type="match status" value="1"/>
</dbReference>
<feature type="chain" id="PRO_0000210047" description="UPF0337 protein SCO0678">
    <location>
        <begin position="1"/>
        <end position="57"/>
    </location>
</feature>
<feature type="region of interest" description="Disordered" evidence="1">
    <location>
        <begin position="1"/>
        <end position="57"/>
    </location>
</feature>
<feature type="compositionally biased region" description="Basic and acidic residues" evidence="1">
    <location>
        <begin position="1"/>
        <end position="22"/>
    </location>
</feature>
<feature type="compositionally biased region" description="Basic and acidic residues" evidence="1">
    <location>
        <begin position="42"/>
        <end position="57"/>
    </location>
</feature>
<evidence type="ECO:0000256" key="1">
    <source>
        <dbReference type="SAM" id="MobiDB-lite"/>
    </source>
</evidence>
<evidence type="ECO:0000305" key="2"/>
<proteinExistence type="inferred from homology"/>
<sequence>MAGNEKSRAKMEQAKGKAKEAAGRAVGNERMTAEGRAAQSKGDARQAKEKGKDVFRH</sequence>
<comment type="similarity">
    <text evidence="2">Belongs to the UPF0337 (CsbD) family.</text>
</comment>
<organism>
    <name type="scientific">Streptomyces coelicolor (strain ATCC BAA-471 / A3(2) / M145)</name>
    <dbReference type="NCBI Taxonomy" id="100226"/>
    <lineage>
        <taxon>Bacteria</taxon>
        <taxon>Bacillati</taxon>
        <taxon>Actinomycetota</taxon>
        <taxon>Actinomycetes</taxon>
        <taxon>Kitasatosporales</taxon>
        <taxon>Streptomycetaceae</taxon>
        <taxon>Streptomyces</taxon>
        <taxon>Streptomyces albidoflavus group</taxon>
    </lineage>
</organism>
<protein>
    <recommendedName>
        <fullName>UPF0337 protein SCO0678</fullName>
    </recommendedName>
</protein>